<proteinExistence type="inferred from homology"/>
<gene>
    <name evidence="1" type="primary">msrA</name>
    <name type="synonym">msr</name>
    <name type="ordered locus">SSO1503</name>
</gene>
<accession>Q97Y45</accession>
<name>MSRA_SACS2</name>
<feature type="chain" id="PRO_0000138624" description="Peptide methionine sulfoxide reductase MsrA">
    <location>
        <begin position="1"/>
        <end position="177"/>
    </location>
</feature>
<feature type="active site" evidence="1">
    <location>
        <position position="10"/>
    </location>
</feature>
<organism>
    <name type="scientific">Saccharolobus solfataricus (strain ATCC 35092 / DSM 1617 / JCM 11322 / P2)</name>
    <name type="common">Sulfolobus solfataricus</name>
    <dbReference type="NCBI Taxonomy" id="273057"/>
    <lineage>
        <taxon>Archaea</taxon>
        <taxon>Thermoproteota</taxon>
        <taxon>Thermoprotei</taxon>
        <taxon>Sulfolobales</taxon>
        <taxon>Sulfolobaceae</taxon>
        <taxon>Saccharolobus</taxon>
    </lineage>
</organism>
<protein>
    <recommendedName>
        <fullName evidence="1">Peptide methionine sulfoxide reductase MsrA</fullName>
        <shortName evidence="1">Protein-methionine-S-oxide reductase</shortName>
        <ecNumber evidence="1">1.8.4.11</ecNumber>
    </recommendedName>
    <alternativeName>
        <fullName evidence="1">Peptide-methionine (S)-S-oxide reductase</fullName>
        <shortName evidence="1">Peptide Met(O) reductase</shortName>
    </alternativeName>
</protein>
<dbReference type="EC" id="1.8.4.11" evidence="1"/>
<dbReference type="EMBL" id="AE006641">
    <property type="protein sequence ID" value="AAK41726.1"/>
    <property type="molecule type" value="Genomic_DNA"/>
</dbReference>
<dbReference type="PIR" id="G90308">
    <property type="entry name" value="G90308"/>
</dbReference>
<dbReference type="RefSeq" id="WP_010923436.1">
    <property type="nucleotide sequence ID" value="NC_002754.1"/>
</dbReference>
<dbReference type="SMR" id="Q97Y45"/>
<dbReference type="FunCoup" id="Q97Y45">
    <property type="interactions" value="237"/>
</dbReference>
<dbReference type="STRING" id="273057.SSO1503"/>
<dbReference type="PaxDb" id="273057-SSO1503"/>
<dbReference type="EnsemblBacteria" id="AAK41726">
    <property type="protein sequence ID" value="AAK41726"/>
    <property type="gene ID" value="SSO1503"/>
</dbReference>
<dbReference type="GeneID" id="1454505"/>
<dbReference type="GeneID" id="27427855"/>
<dbReference type="KEGG" id="sso:SSO1503"/>
<dbReference type="PATRIC" id="fig|273057.12.peg.1544"/>
<dbReference type="eggNOG" id="arCOG02816">
    <property type="taxonomic scope" value="Archaea"/>
</dbReference>
<dbReference type="HOGENOM" id="CLU_031040_10_0_2"/>
<dbReference type="InParanoid" id="Q97Y45"/>
<dbReference type="PhylomeDB" id="Q97Y45"/>
<dbReference type="Proteomes" id="UP000001974">
    <property type="component" value="Chromosome"/>
</dbReference>
<dbReference type="GO" id="GO:0033744">
    <property type="term" value="F:L-methionine:thioredoxin-disulfide S-oxidoreductase activity"/>
    <property type="evidence" value="ECO:0007669"/>
    <property type="project" value="RHEA"/>
</dbReference>
<dbReference type="GO" id="GO:0008113">
    <property type="term" value="F:peptide-methionine (S)-S-oxide reductase activity"/>
    <property type="evidence" value="ECO:0007669"/>
    <property type="project" value="UniProtKB-UniRule"/>
</dbReference>
<dbReference type="GO" id="GO:0036211">
    <property type="term" value="P:protein modification process"/>
    <property type="evidence" value="ECO:0007669"/>
    <property type="project" value="UniProtKB-UniRule"/>
</dbReference>
<dbReference type="Gene3D" id="3.30.1060.10">
    <property type="entry name" value="Peptide methionine sulphoxide reductase MsrA"/>
    <property type="match status" value="1"/>
</dbReference>
<dbReference type="HAMAP" id="MF_01401">
    <property type="entry name" value="MsrA"/>
    <property type="match status" value="1"/>
</dbReference>
<dbReference type="InterPro" id="IPR002569">
    <property type="entry name" value="Met_Sox_Rdtase_MsrA_dom"/>
</dbReference>
<dbReference type="InterPro" id="IPR036509">
    <property type="entry name" value="Met_Sox_Rdtase_MsrA_sf"/>
</dbReference>
<dbReference type="NCBIfam" id="TIGR00401">
    <property type="entry name" value="msrA"/>
    <property type="match status" value="1"/>
</dbReference>
<dbReference type="PANTHER" id="PTHR43774">
    <property type="entry name" value="PEPTIDE METHIONINE SULFOXIDE REDUCTASE"/>
    <property type="match status" value="1"/>
</dbReference>
<dbReference type="PANTHER" id="PTHR43774:SF1">
    <property type="entry name" value="PEPTIDE METHIONINE SULFOXIDE REDUCTASE MSRA 2"/>
    <property type="match status" value="1"/>
</dbReference>
<dbReference type="Pfam" id="PF01625">
    <property type="entry name" value="PMSR"/>
    <property type="match status" value="1"/>
</dbReference>
<dbReference type="SUPFAM" id="SSF55068">
    <property type="entry name" value="Peptide methionine sulfoxide reductase"/>
    <property type="match status" value="1"/>
</dbReference>
<comment type="function">
    <text evidence="1">Has an important function as a repair enzyme for proteins that have been inactivated by oxidation. Catalyzes the reversible oxidation-reduction of methionine sulfoxide in proteins to methionine.</text>
</comment>
<comment type="catalytic activity">
    <reaction evidence="1">
        <text>L-methionyl-[protein] + [thioredoxin]-disulfide + H2O = L-methionyl-(S)-S-oxide-[protein] + [thioredoxin]-dithiol</text>
        <dbReference type="Rhea" id="RHEA:14217"/>
        <dbReference type="Rhea" id="RHEA-COMP:10698"/>
        <dbReference type="Rhea" id="RHEA-COMP:10700"/>
        <dbReference type="Rhea" id="RHEA-COMP:12313"/>
        <dbReference type="Rhea" id="RHEA-COMP:12315"/>
        <dbReference type="ChEBI" id="CHEBI:15377"/>
        <dbReference type="ChEBI" id="CHEBI:16044"/>
        <dbReference type="ChEBI" id="CHEBI:29950"/>
        <dbReference type="ChEBI" id="CHEBI:44120"/>
        <dbReference type="ChEBI" id="CHEBI:50058"/>
        <dbReference type="EC" id="1.8.4.11"/>
    </reaction>
</comment>
<comment type="catalytic activity">
    <reaction evidence="1">
        <text>[thioredoxin]-disulfide + L-methionine + H2O = L-methionine (S)-S-oxide + [thioredoxin]-dithiol</text>
        <dbReference type="Rhea" id="RHEA:19993"/>
        <dbReference type="Rhea" id="RHEA-COMP:10698"/>
        <dbReference type="Rhea" id="RHEA-COMP:10700"/>
        <dbReference type="ChEBI" id="CHEBI:15377"/>
        <dbReference type="ChEBI" id="CHEBI:29950"/>
        <dbReference type="ChEBI" id="CHEBI:50058"/>
        <dbReference type="ChEBI" id="CHEBI:57844"/>
        <dbReference type="ChEBI" id="CHEBI:58772"/>
        <dbReference type="EC" id="1.8.4.11"/>
    </reaction>
</comment>
<comment type="similarity">
    <text evidence="1">Belongs to the MsrA Met sulfoxide reductase family.</text>
</comment>
<evidence type="ECO:0000255" key="1">
    <source>
        <dbReference type="HAMAP-Rule" id="MF_01401"/>
    </source>
</evidence>
<keyword id="KW-0560">Oxidoreductase</keyword>
<keyword id="KW-1185">Reference proteome</keyword>
<reference key="1">
    <citation type="journal article" date="2001" name="Proc. Natl. Acad. Sci. U.S.A.">
        <title>The complete genome of the crenarchaeon Sulfolobus solfataricus P2.</title>
        <authorList>
            <person name="She Q."/>
            <person name="Singh R.K."/>
            <person name="Confalonieri F."/>
            <person name="Zivanovic Y."/>
            <person name="Allard G."/>
            <person name="Awayez M.J."/>
            <person name="Chan-Weiher C.C.-Y."/>
            <person name="Clausen I.G."/>
            <person name="Curtis B.A."/>
            <person name="De Moors A."/>
            <person name="Erauso G."/>
            <person name="Fletcher C."/>
            <person name="Gordon P.M.K."/>
            <person name="Heikamp-de Jong I."/>
            <person name="Jeffries A.C."/>
            <person name="Kozera C.J."/>
            <person name="Medina N."/>
            <person name="Peng X."/>
            <person name="Thi-Ngoc H.P."/>
            <person name="Redder P."/>
            <person name="Schenk M.E."/>
            <person name="Theriault C."/>
            <person name="Tolstrup N."/>
            <person name="Charlebois R.L."/>
            <person name="Doolittle W.F."/>
            <person name="Duguet M."/>
            <person name="Gaasterland T."/>
            <person name="Garrett R.A."/>
            <person name="Ragan M.A."/>
            <person name="Sensen C.W."/>
            <person name="Van der Oost J."/>
        </authorList>
    </citation>
    <scope>NUCLEOTIDE SEQUENCE [LARGE SCALE GENOMIC DNA]</scope>
    <source>
        <strain>ATCC 35092 / DSM 1617 / JCM 11322 / P2</strain>
    </source>
</reference>
<sequence>MEVATLGGGCFWCTEAVYKRVKGVISVKPGYSGGHVPNPTYEDVCTDTTGHAEVVQITFDSSIISYREILEIFFEIHDPTTLNRQGNDVGTQYRSIILYHNEEQRKIAEEMIREVEKRIGKKVVTELKPFEVFYEAEDYHHDFYDKHKYNPYCRLVISPKVKKFMKLFPDKVKIHEG</sequence>